<organism>
    <name type="scientific">Escherichia coli (strain K12 / DH10B)</name>
    <dbReference type="NCBI Taxonomy" id="316385"/>
    <lineage>
        <taxon>Bacteria</taxon>
        <taxon>Pseudomonadati</taxon>
        <taxon>Pseudomonadota</taxon>
        <taxon>Gammaproteobacteria</taxon>
        <taxon>Enterobacterales</taxon>
        <taxon>Enterobacteriaceae</taxon>
        <taxon>Escherichia</taxon>
    </lineage>
</organism>
<sequence length="165" mass="19348">MKTSRLPIAIQQAVMRRLREKLAQANLKLGRNYPEPKLSYTQRGTSAGTAWLESYEIRLNPVLLLENSEAFIEEVVPHELAHLLVWKHFGRVAPHGKEWKWMMENVLGVPARRTHQFELQSVRRNTFPYRCKCQEHQLTVRRHNRVVRGEAVYRCVHCGEQLVAK</sequence>
<feature type="chain" id="PRO_1000133238" description="Protein SprT">
    <location>
        <begin position="1"/>
        <end position="165"/>
    </location>
</feature>
<feature type="domain" description="SprT-like" evidence="1">
    <location>
        <begin position="20"/>
        <end position="163"/>
    </location>
</feature>
<feature type="active site" evidence="1">
    <location>
        <position position="79"/>
    </location>
</feature>
<feature type="binding site" evidence="1">
    <location>
        <position position="78"/>
    </location>
    <ligand>
        <name>Zn(2+)</name>
        <dbReference type="ChEBI" id="CHEBI:29105"/>
    </ligand>
</feature>
<feature type="binding site" evidence="1">
    <location>
        <position position="82"/>
    </location>
    <ligand>
        <name>Zn(2+)</name>
        <dbReference type="ChEBI" id="CHEBI:29105"/>
    </ligand>
</feature>
<proteinExistence type="inferred from homology"/>
<reference key="1">
    <citation type="journal article" date="2008" name="J. Bacteriol.">
        <title>The complete genome sequence of Escherichia coli DH10B: insights into the biology of a laboratory workhorse.</title>
        <authorList>
            <person name="Durfee T."/>
            <person name="Nelson R."/>
            <person name="Baldwin S."/>
            <person name="Plunkett G. III"/>
            <person name="Burland V."/>
            <person name="Mau B."/>
            <person name="Petrosino J.F."/>
            <person name="Qin X."/>
            <person name="Muzny D.M."/>
            <person name="Ayele M."/>
            <person name="Gibbs R.A."/>
            <person name="Csorgo B."/>
            <person name="Posfai G."/>
            <person name="Weinstock G.M."/>
            <person name="Blattner F.R."/>
        </authorList>
    </citation>
    <scope>NUCLEOTIDE SEQUENCE [LARGE SCALE GENOMIC DNA]</scope>
    <source>
        <strain>K12 / DH10B</strain>
    </source>
</reference>
<evidence type="ECO:0000255" key="1">
    <source>
        <dbReference type="HAMAP-Rule" id="MF_00746"/>
    </source>
</evidence>
<keyword id="KW-0963">Cytoplasm</keyword>
<keyword id="KW-0479">Metal-binding</keyword>
<keyword id="KW-0862">Zinc</keyword>
<protein>
    <recommendedName>
        <fullName evidence="1">Protein SprT</fullName>
    </recommendedName>
</protein>
<name>SPRT_ECODH</name>
<dbReference type="EMBL" id="CP000948">
    <property type="protein sequence ID" value="ACB04039.1"/>
    <property type="molecule type" value="Genomic_DNA"/>
</dbReference>
<dbReference type="RefSeq" id="WP_001300769.1">
    <property type="nucleotide sequence ID" value="NC_010473.1"/>
</dbReference>
<dbReference type="SMR" id="B1XFA5"/>
<dbReference type="KEGG" id="ecd:ECDH10B_3119"/>
<dbReference type="HOGENOM" id="CLU_113336_0_1_6"/>
<dbReference type="GO" id="GO:0005737">
    <property type="term" value="C:cytoplasm"/>
    <property type="evidence" value="ECO:0007669"/>
    <property type="project" value="UniProtKB-SubCell"/>
</dbReference>
<dbReference type="GO" id="GO:0008270">
    <property type="term" value="F:zinc ion binding"/>
    <property type="evidence" value="ECO:0007669"/>
    <property type="project" value="UniProtKB-UniRule"/>
</dbReference>
<dbReference type="GO" id="GO:0006950">
    <property type="term" value="P:response to stress"/>
    <property type="evidence" value="ECO:0007669"/>
    <property type="project" value="UniProtKB-ARBA"/>
</dbReference>
<dbReference type="Gene3D" id="3.30.2010.10">
    <property type="entry name" value="Metalloproteases ('zincins'), catalytic domain"/>
    <property type="match status" value="1"/>
</dbReference>
<dbReference type="HAMAP" id="MF_00746">
    <property type="entry name" value="SprT"/>
    <property type="match status" value="1"/>
</dbReference>
<dbReference type="InterPro" id="IPR006640">
    <property type="entry name" value="SprT-like_domain"/>
</dbReference>
<dbReference type="InterPro" id="IPR035240">
    <property type="entry name" value="SprT_Zn_ribbon"/>
</dbReference>
<dbReference type="InterPro" id="IPR023483">
    <property type="entry name" value="Uncharacterised_SprT"/>
</dbReference>
<dbReference type="NCBIfam" id="NF003421">
    <property type="entry name" value="PRK04860.1"/>
    <property type="match status" value="1"/>
</dbReference>
<dbReference type="PANTHER" id="PTHR38773">
    <property type="entry name" value="PROTEIN SPRT"/>
    <property type="match status" value="1"/>
</dbReference>
<dbReference type="PANTHER" id="PTHR38773:SF1">
    <property type="entry name" value="PROTEIN SPRT"/>
    <property type="match status" value="1"/>
</dbReference>
<dbReference type="Pfam" id="PF10263">
    <property type="entry name" value="SprT-like"/>
    <property type="match status" value="1"/>
</dbReference>
<dbReference type="Pfam" id="PF17283">
    <property type="entry name" value="Zn_ribbon_SprT"/>
    <property type="match status" value="1"/>
</dbReference>
<dbReference type="SMART" id="SM00731">
    <property type="entry name" value="SprT"/>
    <property type="match status" value="1"/>
</dbReference>
<dbReference type="PROSITE" id="PS00142">
    <property type="entry name" value="ZINC_PROTEASE"/>
    <property type="match status" value="1"/>
</dbReference>
<comment type="cofactor">
    <cofactor evidence="1">
        <name>Zn(2+)</name>
        <dbReference type="ChEBI" id="CHEBI:29105"/>
    </cofactor>
    <text evidence="1">Binds 1 zinc ion.</text>
</comment>
<comment type="subcellular location">
    <subcellularLocation>
        <location evidence="1">Cytoplasm</location>
    </subcellularLocation>
</comment>
<comment type="similarity">
    <text evidence="1">Belongs to the SprT family.</text>
</comment>
<accession>B1XFA5</accession>
<gene>
    <name evidence="1" type="primary">sprT</name>
    <name type="ordered locus">ECDH10B_3119</name>
</gene>